<keyword id="KW-0150">Chloroplast</keyword>
<keyword id="KW-0472">Membrane</keyword>
<keyword id="KW-0602">Photosynthesis</keyword>
<keyword id="KW-0604">Photosystem II</keyword>
<keyword id="KW-0934">Plastid</keyword>
<keyword id="KW-0674">Reaction center</keyword>
<keyword id="KW-0793">Thylakoid</keyword>
<keyword id="KW-0812">Transmembrane</keyword>
<keyword id="KW-1133">Transmembrane helix</keyword>
<evidence type="ECO:0000255" key="1">
    <source>
        <dbReference type="HAMAP-Rule" id="MF_01316"/>
    </source>
</evidence>
<proteinExistence type="inferred from homology"/>
<comment type="function">
    <text evidence="1">One of the components of the core complex of photosystem II (PSII), required for its stability and/or assembly. PSII is a light-driven water:plastoquinone oxidoreductase that uses light energy to abstract electrons from H(2)O, generating O(2) and a proton gradient subsequently used for ATP formation. It consists of a core antenna complex that captures photons, and an electron transfer chain that converts photonic excitation into a charge separation.</text>
</comment>
<comment type="subunit">
    <text evidence="1">PSII is composed of 1 copy each of membrane proteins PsbA, PsbB, PsbC, PsbD, PsbE, PsbF, PsbH, PsbI, PsbJ, PsbK, PsbL, PsbM, PsbT, PsbX, PsbY, PsbZ, Psb30/Ycf12, at least 3 peripheral proteins of the oxygen-evolving complex and a large number of cofactors. It forms dimeric complexes.</text>
</comment>
<comment type="subcellular location">
    <subcellularLocation>
        <location evidence="1">Plastid</location>
        <location evidence="1">Chloroplast thylakoid membrane</location>
        <topology evidence="1">Single-pass membrane protein</topology>
    </subcellularLocation>
</comment>
<comment type="similarity">
    <text evidence="1">Belongs to the PsbI family.</text>
</comment>
<name>PSBI_EMIHU</name>
<reference key="1">
    <citation type="journal article" date="2005" name="DNA Res.">
        <title>The complete plastid genome sequence of the haptophyte Emiliania huxleyi: a comparison to other plastid genomes.</title>
        <authorList>
            <person name="Sanchez-Puerta M.V."/>
            <person name="Bachvaroff T.R."/>
            <person name="Delwiche C.F."/>
        </authorList>
    </citation>
    <scope>NUCLEOTIDE SEQUENCE [LARGE SCALE GENOMIC DNA]</scope>
    <source>
        <strain>CCMP373 / CSIRO-CS-57 / BT6</strain>
    </source>
</reference>
<accession>Q4G3E7</accession>
<gene>
    <name evidence="1" type="primary">psbI</name>
</gene>
<geneLocation type="chloroplast"/>
<protein>
    <recommendedName>
        <fullName evidence="1">Photosystem II reaction center protein I</fullName>
        <shortName evidence="1">PSII-I</shortName>
    </recommendedName>
    <alternativeName>
        <fullName evidence="1">PSII 4.8 kDa protein</fullName>
    </alternativeName>
</protein>
<sequence length="38" mass="4470">MFTLKILVYTVVIFFVSLFTFGFLSNDPSRNPNRKDLE</sequence>
<dbReference type="EMBL" id="AY741371">
    <property type="protein sequence ID" value="AAX13819.1"/>
    <property type="molecule type" value="Genomic_DNA"/>
</dbReference>
<dbReference type="RefSeq" id="YP_277320.1">
    <property type="nucleotide sequence ID" value="NC_007288.1"/>
</dbReference>
<dbReference type="SMR" id="Q4G3E7"/>
<dbReference type="STRING" id="2903.Q4G3E7"/>
<dbReference type="GeneID" id="3562510"/>
<dbReference type="GO" id="GO:0009535">
    <property type="term" value="C:chloroplast thylakoid membrane"/>
    <property type="evidence" value="ECO:0007669"/>
    <property type="project" value="UniProtKB-SubCell"/>
</dbReference>
<dbReference type="GO" id="GO:0009539">
    <property type="term" value="C:photosystem II reaction center"/>
    <property type="evidence" value="ECO:0007669"/>
    <property type="project" value="InterPro"/>
</dbReference>
<dbReference type="GO" id="GO:0015979">
    <property type="term" value="P:photosynthesis"/>
    <property type="evidence" value="ECO:0007669"/>
    <property type="project" value="UniProtKB-UniRule"/>
</dbReference>
<dbReference type="HAMAP" id="MF_01316">
    <property type="entry name" value="PSII_PsbI"/>
    <property type="match status" value="1"/>
</dbReference>
<dbReference type="InterPro" id="IPR003686">
    <property type="entry name" value="PSII_PsbI"/>
</dbReference>
<dbReference type="InterPro" id="IPR037271">
    <property type="entry name" value="PSII_PsbI_sf"/>
</dbReference>
<dbReference type="NCBIfam" id="NF002735">
    <property type="entry name" value="PRK02655.1"/>
    <property type="match status" value="1"/>
</dbReference>
<dbReference type="PANTHER" id="PTHR35772">
    <property type="entry name" value="PHOTOSYSTEM II REACTION CENTER PROTEIN I"/>
    <property type="match status" value="1"/>
</dbReference>
<dbReference type="PANTHER" id="PTHR35772:SF1">
    <property type="entry name" value="PHOTOSYSTEM II REACTION CENTER PROTEIN I"/>
    <property type="match status" value="1"/>
</dbReference>
<dbReference type="Pfam" id="PF02532">
    <property type="entry name" value="PsbI"/>
    <property type="match status" value="1"/>
</dbReference>
<dbReference type="SUPFAM" id="SSF161041">
    <property type="entry name" value="Photosystem II reaction center protein I, PsbI"/>
    <property type="match status" value="1"/>
</dbReference>
<feature type="chain" id="PRO_0000275820" description="Photosystem II reaction center protein I">
    <location>
        <begin position="1"/>
        <end position="38"/>
    </location>
</feature>
<feature type="transmembrane region" description="Helical" evidence="1">
    <location>
        <begin position="4"/>
        <end position="24"/>
    </location>
</feature>
<organism>
    <name type="scientific">Emiliania huxleyi</name>
    <name type="common">Coccolithophore</name>
    <name type="synonym">Pontosphaera huxleyi</name>
    <dbReference type="NCBI Taxonomy" id="2903"/>
    <lineage>
        <taxon>Eukaryota</taxon>
        <taxon>Haptista</taxon>
        <taxon>Haptophyta</taxon>
        <taxon>Prymnesiophyceae</taxon>
        <taxon>Isochrysidales</taxon>
        <taxon>Noelaerhabdaceae</taxon>
        <taxon>Emiliania</taxon>
    </lineage>
</organism>